<gene>
    <name evidence="1" type="primary">aroC</name>
    <name type="ordered locus">PMT9312_0226</name>
</gene>
<keyword id="KW-0028">Amino-acid biosynthesis</keyword>
<keyword id="KW-0057">Aromatic amino acid biosynthesis</keyword>
<keyword id="KW-0274">FAD</keyword>
<keyword id="KW-0285">Flavoprotein</keyword>
<keyword id="KW-0288">FMN</keyword>
<keyword id="KW-0456">Lyase</keyword>
<keyword id="KW-0521">NADP</keyword>
<organism>
    <name type="scientific">Prochlorococcus marinus (strain MIT 9312)</name>
    <dbReference type="NCBI Taxonomy" id="74546"/>
    <lineage>
        <taxon>Bacteria</taxon>
        <taxon>Bacillati</taxon>
        <taxon>Cyanobacteriota</taxon>
        <taxon>Cyanophyceae</taxon>
        <taxon>Synechococcales</taxon>
        <taxon>Prochlorococcaceae</taxon>
        <taxon>Prochlorococcus</taxon>
    </lineage>
</organism>
<sequence>MSSSFGKIFRVSTFGESHGGGVGVILDGCPPKLKIDIKLIQNELDRRRPGQSDITTPRNEDDKIEILSGIKEGLTLGTPIAMLVRNKDQRPGDYNNLEQVFRPSHADGTYHLKYGIQAGSGGGRASARETIGRVAAGAVAKQLLKNLCNTEILSWVKRIHDIDSDVNKEKISLNKIDSNIVRCPDEKVSAEMIDRIKDLKRQGDSCGGVIECLVRNVPSGLGMPVFDKLEADLAKALMSLPATKGFEIGSGFSGTYLKGSEHNDSFIKSDDISKLRTTSNNSGGIQGGISNGENIEMKIAFKPTATIGKEQKTVNAEGKEVLMKAKGRHDPCVLPRAVPMVDAMVALVLADHLLLNNAQCGLMKN</sequence>
<comment type="function">
    <text evidence="1">Catalyzes the anti-1,4-elimination of the C-3 phosphate and the C-6 proR hydrogen from 5-enolpyruvylshikimate-3-phosphate (EPSP) to yield chorismate, which is the branch point compound that serves as the starting substrate for the three terminal pathways of aromatic amino acid biosynthesis. This reaction introduces a second double bond into the aromatic ring system.</text>
</comment>
<comment type="catalytic activity">
    <reaction evidence="1">
        <text>5-O-(1-carboxyvinyl)-3-phosphoshikimate = chorismate + phosphate</text>
        <dbReference type="Rhea" id="RHEA:21020"/>
        <dbReference type="ChEBI" id="CHEBI:29748"/>
        <dbReference type="ChEBI" id="CHEBI:43474"/>
        <dbReference type="ChEBI" id="CHEBI:57701"/>
        <dbReference type="EC" id="4.2.3.5"/>
    </reaction>
</comment>
<comment type="cofactor">
    <cofactor evidence="1">
        <name>FMNH2</name>
        <dbReference type="ChEBI" id="CHEBI:57618"/>
    </cofactor>
    <text evidence="1">Reduced FMN (FMNH(2)).</text>
</comment>
<comment type="pathway">
    <text evidence="1">Metabolic intermediate biosynthesis; chorismate biosynthesis; chorismate from D-erythrose 4-phosphate and phosphoenolpyruvate: step 7/7.</text>
</comment>
<comment type="subunit">
    <text evidence="1">Homotetramer.</text>
</comment>
<comment type="similarity">
    <text evidence="1">Belongs to the chorismate synthase family.</text>
</comment>
<reference key="1">
    <citation type="journal article" date="2006" name="Science">
        <title>Genomic islands and the ecology and evolution of Prochlorococcus.</title>
        <authorList>
            <person name="Coleman M.L."/>
            <person name="Sullivan M.B."/>
            <person name="Martiny A.C."/>
            <person name="Steglich C."/>
            <person name="Barry K."/>
            <person name="Delong E.F."/>
            <person name="Chisholm S.W."/>
        </authorList>
    </citation>
    <scope>NUCLEOTIDE SEQUENCE [LARGE SCALE GENOMIC DNA]</scope>
    <source>
        <strain>MIT 9312</strain>
    </source>
</reference>
<protein>
    <recommendedName>
        <fullName evidence="1">Chorismate synthase</fullName>
        <shortName evidence="1">CS</shortName>
        <ecNumber evidence="1">4.2.3.5</ecNumber>
    </recommendedName>
    <alternativeName>
        <fullName evidence="1">5-enolpyruvylshikimate-3-phosphate phospholyase</fullName>
    </alternativeName>
</protein>
<feature type="chain" id="PRO_0000256313" description="Chorismate synthase">
    <location>
        <begin position="1"/>
        <end position="365"/>
    </location>
</feature>
<feature type="binding site" evidence="1">
    <location>
        <position position="47"/>
    </location>
    <ligand>
        <name>NADP(+)</name>
        <dbReference type="ChEBI" id="CHEBI:58349"/>
    </ligand>
</feature>
<feature type="binding site" evidence="1">
    <location>
        <begin position="124"/>
        <end position="126"/>
    </location>
    <ligand>
        <name>FMN</name>
        <dbReference type="ChEBI" id="CHEBI:58210"/>
    </ligand>
</feature>
<feature type="binding site" evidence="1">
    <location>
        <position position="287"/>
    </location>
    <ligand>
        <name>FMN</name>
        <dbReference type="ChEBI" id="CHEBI:58210"/>
    </ligand>
</feature>
<feature type="binding site" evidence="1">
    <location>
        <begin position="302"/>
        <end position="306"/>
    </location>
    <ligand>
        <name>FMN</name>
        <dbReference type="ChEBI" id="CHEBI:58210"/>
    </ligand>
</feature>
<feature type="binding site" evidence="1">
    <location>
        <position position="328"/>
    </location>
    <ligand>
        <name>FMN</name>
        <dbReference type="ChEBI" id="CHEBI:58210"/>
    </ligand>
</feature>
<name>AROC_PROM9</name>
<accession>Q31CV7</accession>
<proteinExistence type="inferred from homology"/>
<evidence type="ECO:0000255" key="1">
    <source>
        <dbReference type="HAMAP-Rule" id="MF_00300"/>
    </source>
</evidence>
<dbReference type="EC" id="4.2.3.5" evidence="1"/>
<dbReference type="EMBL" id="CP000111">
    <property type="protein sequence ID" value="ABB49288.1"/>
    <property type="molecule type" value="Genomic_DNA"/>
</dbReference>
<dbReference type="RefSeq" id="WP_011375792.1">
    <property type="nucleotide sequence ID" value="NC_007577.1"/>
</dbReference>
<dbReference type="SMR" id="Q31CV7"/>
<dbReference type="STRING" id="74546.PMT9312_0226"/>
<dbReference type="KEGG" id="pmi:PMT9312_0226"/>
<dbReference type="eggNOG" id="COG0082">
    <property type="taxonomic scope" value="Bacteria"/>
</dbReference>
<dbReference type="HOGENOM" id="CLU_034547_0_1_3"/>
<dbReference type="OrthoDB" id="9771806at2"/>
<dbReference type="UniPathway" id="UPA00053">
    <property type="reaction ID" value="UER00090"/>
</dbReference>
<dbReference type="Proteomes" id="UP000002715">
    <property type="component" value="Chromosome"/>
</dbReference>
<dbReference type="GO" id="GO:0005829">
    <property type="term" value="C:cytosol"/>
    <property type="evidence" value="ECO:0007669"/>
    <property type="project" value="TreeGrafter"/>
</dbReference>
<dbReference type="GO" id="GO:0004107">
    <property type="term" value="F:chorismate synthase activity"/>
    <property type="evidence" value="ECO:0007669"/>
    <property type="project" value="UniProtKB-UniRule"/>
</dbReference>
<dbReference type="GO" id="GO:0010181">
    <property type="term" value="F:FMN binding"/>
    <property type="evidence" value="ECO:0007669"/>
    <property type="project" value="TreeGrafter"/>
</dbReference>
<dbReference type="GO" id="GO:0008652">
    <property type="term" value="P:amino acid biosynthetic process"/>
    <property type="evidence" value="ECO:0007669"/>
    <property type="project" value="UniProtKB-KW"/>
</dbReference>
<dbReference type="GO" id="GO:0009073">
    <property type="term" value="P:aromatic amino acid family biosynthetic process"/>
    <property type="evidence" value="ECO:0007669"/>
    <property type="project" value="UniProtKB-KW"/>
</dbReference>
<dbReference type="GO" id="GO:0009423">
    <property type="term" value="P:chorismate biosynthetic process"/>
    <property type="evidence" value="ECO:0007669"/>
    <property type="project" value="UniProtKB-UniRule"/>
</dbReference>
<dbReference type="CDD" id="cd07304">
    <property type="entry name" value="Chorismate_synthase"/>
    <property type="match status" value="1"/>
</dbReference>
<dbReference type="FunFam" id="3.60.150.10:FF:000003">
    <property type="entry name" value="Chorismate synthase"/>
    <property type="match status" value="1"/>
</dbReference>
<dbReference type="Gene3D" id="3.60.150.10">
    <property type="entry name" value="Chorismate synthase AroC"/>
    <property type="match status" value="1"/>
</dbReference>
<dbReference type="HAMAP" id="MF_00300">
    <property type="entry name" value="Chorismate_synth"/>
    <property type="match status" value="1"/>
</dbReference>
<dbReference type="InterPro" id="IPR000453">
    <property type="entry name" value="Chorismate_synth"/>
</dbReference>
<dbReference type="InterPro" id="IPR035904">
    <property type="entry name" value="Chorismate_synth_AroC_sf"/>
</dbReference>
<dbReference type="InterPro" id="IPR020541">
    <property type="entry name" value="Chorismate_synthase_CS"/>
</dbReference>
<dbReference type="NCBIfam" id="TIGR00033">
    <property type="entry name" value="aroC"/>
    <property type="match status" value="1"/>
</dbReference>
<dbReference type="NCBIfam" id="NF003793">
    <property type="entry name" value="PRK05382.1"/>
    <property type="match status" value="1"/>
</dbReference>
<dbReference type="PANTHER" id="PTHR21085">
    <property type="entry name" value="CHORISMATE SYNTHASE"/>
    <property type="match status" value="1"/>
</dbReference>
<dbReference type="PANTHER" id="PTHR21085:SF0">
    <property type="entry name" value="CHORISMATE SYNTHASE"/>
    <property type="match status" value="1"/>
</dbReference>
<dbReference type="Pfam" id="PF01264">
    <property type="entry name" value="Chorismate_synt"/>
    <property type="match status" value="1"/>
</dbReference>
<dbReference type="PIRSF" id="PIRSF001456">
    <property type="entry name" value="Chorismate_synth"/>
    <property type="match status" value="1"/>
</dbReference>
<dbReference type="SUPFAM" id="SSF103263">
    <property type="entry name" value="Chorismate synthase, AroC"/>
    <property type="match status" value="1"/>
</dbReference>
<dbReference type="PROSITE" id="PS00787">
    <property type="entry name" value="CHORISMATE_SYNTHASE_1"/>
    <property type="match status" value="1"/>
</dbReference>
<dbReference type="PROSITE" id="PS00788">
    <property type="entry name" value="CHORISMATE_SYNTHASE_2"/>
    <property type="match status" value="1"/>
</dbReference>